<organism>
    <name type="scientific">Acanthamoeba polyphaga mimivirus</name>
    <name type="common">APMV</name>
    <dbReference type="NCBI Taxonomy" id="212035"/>
    <lineage>
        <taxon>Viruses</taxon>
        <taxon>Varidnaviria</taxon>
        <taxon>Bamfordvirae</taxon>
        <taxon>Nucleocytoviricota</taxon>
        <taxon>Megaviricetes</taxon>
        <taxon>Imitervirales</taxon>
        <taxon>Mimiviridae</taxon>
        <taxon>Megamimivirinae</taxon>
        <taxon>Mimivirus</taxon>
        <taxon>Mimivirus bradfordmassiliense</taxon>
    </lineage>
</organism>
<reference key="1">
    <citation type="journal article" date="2004" name="Science">
        <title>The 1.2-megabase genome sequence of Mimivirus.</title>
        <authorList>
            <person name="Raoult D."/>
            <person name="Audic S."/>
            <person name="Robert C."/>
            <person name="Abergel C."/>
            <person name="Renesto P."/>
            <person name="Ogata H."/>
            <person name="La Scola B."/>
            <person name="Susan M."/>
            <person name="Claverie J.-M."/>
        </authorList>
    </citation>
    <scope>NUCLEOTIDE SEQUENCE [LARGE SCALE GENOMIC DNA]</scope>
    <source>
        <strain>Rowbotham-Bradford</strain>
    </source>
</reference>
<name>YL344_MIMIV</name>
<protein>
    <recommendedName>
        <fullName>Uncharacterized WD repeat-containing protein L344</fullName>
    </recommendedName>
</protein>
<proteinExistence type="predicted"/>
<organismHost>
    <name type="scientific">Acanthamoeba polyphaga</name>
    <name type="common">Amoeba</name>
    <dbReference type="NCBI Taxonomy" id="5757"/>
</organismHost>
<sequence>MDPNSIEIELSDDDRVISFHANRQNLINISEYFKILLTKFNLHDKQQIPIKVPNAFVAYDIIVELTENTESNVGNLPVWEHYLEKLKFMDYVGLSAKMIRSIDTTNIVVPKSNFESLIKLYEQLGYNSSLIPLIKNSFQKDNTNILIEPHVAKKLLNVSESKIIHAGYTRGGLHVINYCDYIDRKIIHTFDKHNDFISFLSYSKWNHDASMEQYINSIAISPNKKYIALATTCGLIIYNLIDKTHHDTIQTNQNINFVDFNYSSTNIFYRKRKWIGANGSNKVGIYNLETSKEISIGIDNLRNYHSKLSSTGTDLCILSKNLLVMCDNFNRIVVINYALDKIIKILDSCIYLKNNDNTNTVFLFPSSNKKYLGHLIVNYKKIYVQKSDTYTLFVYYIDSKRQDLQYVIEYTGSAPVHIDISNKLVVIGDCTGFFSIYKYKSGKIVFRNKIKSHNSCVTSIAISSNNKMILTAGLDGLLKLWNSKTLNLIDSYYHGCEYVDFISFTSEFGLDFDNFLRKSISNKSIQ</sequence>
<keyword id="KW-1185">Reference proteome</keyword>
<keyword id="KW-0677">Repeat</keyword>
<keyword id="KW-0853">WD repeat</keyword>
<feature type="chain" id="PRO_0000253216" description="Uncharacterized WD repeat-containing protein L344">
    <location>
        <begin position="1"/>
        <end position="526"/>
    </location>
</feature>
<feature type="repeat" description="WD 1">
    <location>
        <begin position="210"/>
        <end position="248"/>
    </location>
</feature>
<feature type="repeat" description="WD 2">
    <location>
        <begin position="452"/>
        <end position="491"/>
    </location>
</feature>
<dbReference type="EMBL" id="AY653733">
    <property type="protein sequence ID" value="AAV50613.1"/>
    <property type="molecule type" value="Genomic_DNA"/>
</dbReference>
<dbReference type="KEGG" id="vg:9924961"/>
<dbReference type="Proteomes" id="UP000001134">
    <property type="component" value="Genome"/>
</dbReference>
<dbReference type="Gene3D" id="2.130.10.10">
    <property type="entry name" value="YVTN repeat-like/Quinoprotein amine dehydrogenase"/>
    <property type="match status" value="2"/>
</dbReference>
<dbReference type="InterPro" id="IPR015943">
    <property type="entry name" value="WD40/YVTN_repeat-like_dom_sf"/>
</dbReference>
<dbReference type="InterPro" id="IPR036322">
    <property type="entry name" value="WD40_repeat_dom_sf"/>
</dbReference>
<dbReference type="InterPro" id="IPR001680">
    <property type="entry name" value="WD40_rpt"/>
</dbReference>
<dbReference type="Pfam" id="PF00400">
    <property type="entry name" value="WD40"/>
    <property type="match status" value="1"/>
</dbReference>
<dbReference type="SMART" id="SM00320">
    <property type="entry name" value="WD40"/>
    <property type="match status" value="2"/>
</dbReference>
<dbReference type="SUPFAM" id="SSF50978">
    <property type="entry name" value="WD40 repeat-like"/>
    <property type="match status" value="1"/>
</dbReference>
<dbReference type="PROSITE" id="PS00678">
    <property type="entry name" value="WD_REPEATS_1"/>
    <property type="match status" value="1"/>
</dbReference>
<dbReference type="PROSITE" id="PS50082">
    <property type="entry name" value="WD_REPEATS_2"/>
    <property type="match status" value="1"/>
</dbReference>
<dbReference type="PROSITE" id="PS50294">
    <property type="entry name" value="WD_REPEATS_REGION"/>
    <property type="match status" value="1"/>
</dbReference>
<accession>Q5UQT6</accession>
<gene>
    <name type="ordered locus">MIMI_L344</name>
</gene>